<dbReference type="EC" id="2.3.1.191" evidence="1"/>
<dbReference type="EMBL" id="CP001019">
    <property type="protein sequence ID" value="ACJ18696.1"/>
    <property type="molecule type" value="Genomic_DNA"/>
</dbReference>
<dbReference type="RefSeq" id="WP_005771660.1">
    <property type="nucleotide sequence ID" value="NC_011527.1"/>
</dbReference>
<dbReference type="SMR" id="B6J168"/>
<dbReference type="KEGG" id="cbg:CbuG_1390"/>
<dbReference type="HOGENOM" id="CLU_049865_0_1_6"/>
<dbReference type="UniPathway" id="UPA00973"/>
<dbReference type="GO" id="GO:0016020">
    <property type="term" value="C:membrane"/>
    <property type="evidence" value="ECO:0007669"/>
    <property type="project" value="GOC"/>
</dbReference>
<dbReference type="GO" id="GO:0016410">
    <property type="term" value="F:N-acyltransferase activity"/>
    <property type="evidence" value="ECO:0007669"/>
    <property type="project" value="InterPro"/>
</dbReference>
<dbReference type="GO" id="GO:0009245">
    <property type="term" value="P:lipid A biosynthetic process"/>
    <property type="evidence" value="ECO:0007669"/>
    <property type="project" value="UniProtKB-UniRule"/>
</dbReference>
<dbReference type="CDD" id="cd03352">
    <property type="entry name" value="LbH_LpxD"/>
    <property type="match status" value="1"/>
</dbReference>
<dbReference type="Gene3D" id="1.20.5.170">
    <property type="match status" value="1"/>
</dbReference>
<dbReference type="Gene3D" id="2.160.10.10">
    <property type="entry name" value="Hexapeptide repeat proteins"/>
    <property type="match status" value="1"/>
</dbReference>
<dbReference type="Gene3D" id="3.40.1390.10">
    <property type="entry name" value="MurE/MurF, N-terminal domain"/>
    <property type="match status" value="1"/>
</dbReference>
<dbReference type="HAMAP" id="MF_00523">
    <property type="entry name" value="LpxD"/>
    <property type="match status" value="1"/>
</dbReference>
<dbReference type="InterPro" id="IPR001451">
    <property type="entry name" value="Hexapep"/>
</dbReference>
<dbReference type="InterPro" id="IPR007691">
    <property type="entry name" value="LpxD"/>
</dbReference>
<dbReference type="InterPro" id="IPR011004">
    <property type="entry name" value="Trimer_LpxA-like_sf"/>
</dbReference>
<dbReference type="InterPro" id="IPR020573">
    <property type="entry name" value="UDP_GlcNAc_AcTrfase_non-rep"/>
</dbReference>
<dbReference type="NCBIfam" id="TIGR01853">
    <property type="entry name" value="lipid_A_lpxD"/>
    <property type="match status" value="1"/>
</dbReference>
<dbReference type="NCBIfam" id="NF002060">
    <property type="entry name" value="PRK00892.1"/>
    <property type="match status" value="1"/>
</dbReference>
<dbReference type="PANTHER" id="PTHR43378">
    <property type="entry name" value="UDP-3-O-ACYLGLUCOSAMINE N-ACYLTRANSFERASE"/>
    <property type="match status" value="1"/>
</dbReference>
<dbReference type="PANTHER" id="PTHR43378:SF2">
    <property type="entry name" value="UDP-3-O-ACYLGLUCOSAMINE N-ACYLTRANSFERASE 1, MITOCHONDRIAL-RELATED"/>
    <property type="match status" value="1"/>
</dbReference>
<dbReference type="Pfam" id="PF00132">
    <property type="entry name" value="Hexapep"/>
    <property type="match status" value="3"/>
</dbReference>
<dbReference type="Pfam" id="PF14602">
    <property type="entry name" value="Hexapep_2"/>
    <property type="match status" value="1"/>
</dbReference>
<dbReference type="Pfam" id="PF04613">
    <property type="entry name" value="LpxD"/>
    <property type="match status" value="1"/>
</dbReference>
<dbReference type="SUPFAM" id="SSF51161">
    <property type="entry name" value="Trimeric LpxA-like enzymes"/>
    <property type="match status" value="1"/>
</dbReference>
<comment type="function">
    <text evidence="1">Catalyzes the N-acylation of UDP-3-O-acylglucosamine using 3-hydroxyacyl-ACP as the acyl donor. Is involved in the biosynthesis of lipid A, a phosphorylated glycolipid that anchors the lipopolysaccharide to the outer membrane of the cell.</text>
</comment>
<comment type="catalytic activity">
    <reaction evidence="1">
        <text>a UDP-3-O-[(3R)-3-hydroxyacyl]-alpha-D-glucosamine + a (3R)-hydroxyacyl-[ACP] = a UDP-2-N,3-O-bis[(3R)-3-hydroxyacyl]-alpha-D-glucosamine + holo-[ACP] + H(+)</text>
        <dbReference type="Rhea" id="RHEA:53836"/>
        <dbReference type="Rhea" id="RHEA-COMP:9685"/>
        <dbReference type="Rhea" id="RHEA-COMP:9945"/>
        <dbReference type="ChEBI" id="CHEBI:15378"/>
        <dbReference type="ChEBI" id="CHEBI:64479"/>
        <dbReference type="ChEBI" id="CHEBI:78827"/>
        <dbReference type="ChEBI" id="CHEBI:137740"/>
        <dbReference type="ChEBI" id="CHEBI:137748"/>
        <dbReference type="EC" id="2.3.1.191"/>
    </reaction>
</comment>
<comment type="pathway">
    <text evidence="1">Bacterial outer membrane biogenesis; LPS lipid A biosynthesis.</text>
</comment>
<comment type="subunit">
    <text evidence="1">Homotrimer.</text>
</comment>
<comment type="similarity">
    <text evidence="1">Belongs to the transferase hexapeptide repeat family. LpxD subfamily.</text>
</comment>
<gene>
    <name evidence="1" type="primary">lpxD</name>
    <name type="ordered locus">CbuG_1390</name>
</gene>
<protein>
    <recommendedName>
        <fullName evidence="1">UDP-3-O-acylglucosamine N-acyltransferase</fullName>
        <ecNumber evidence="1">2.3.1.191</ecNumber>
    </recommendedName>
</protein>
<proteinExistence type="inferred from homology"/>
<feature type="chain" id="PRO_1000127672" description="UDP-3-O-acylglucosamine N-acyltransferase">
    <location>
        <begin position="1"/>
        <end position="342"/>
    </location>
</feature>
<feature type="active site" description="Proton acceptor" evidence="1">
    <location>
        <position position="243"/>
    </location>
</feature>
<name>LPXD_COXB2</name>
<sequence length="342" mass="36272">MTRGLTYSLTELATAIGATVQGDGDCKIHNVAAIAQAQPGEISFVTDRKYRKYLTQTKASAILLDEKLASRCPINALVMSNPKLGFAKLLTLLRPQSLPTGGIHPTAVVGANCQIDPSAHIGAHVVIEEDVVIGPRTLIGAGASIGRGSQIGSDCCLHSRVTLYSQTRIGDRSIIHSGAVIGADGFGLIQDEKGEWVKIPQVGRVIIGDDVEIGANATIDRGALDDTVIGNGVKIDDLVMIAHNVRIGDHTVIAGCAGVAGSTTVGRHCMIGASAGLNGHIEICDNVIITGMGMIQKSITKPGIYSSGTGMQTNREWRKSVIRFWQLDELAKRLKRLEKLIR</sequence>
<organism>
    <name type="scientific">Coxiella burnetii (strain CbuG_Q212)</name>
    <name type="common">Coxiella burnetii (strain Q212)</name>
    <dbReference type="NCBI Taxonomy" id="434923"/>
    <lineage>
        <taxon>Bacteria</taxon>
        <taxon>Pseudomonadati</taxon>
        <taxon>Pseudomonadota</taxon>
        <taxon>Gammaproteobacteria</taxon>
        <taxon>Legionellales</taxon>
        <taxon>Coxiellaceae</taxon>
        <taxon>Coxiella</taxon>
    </lineage>
</organism>
<keyword id="KW-0012">Acyltransferase</keyword>
<keyword id="KW-0441">Lipid A biosynthesis</keyword>
<keyword id="KW-0444">Lipid biosynthesis</keyword>
<keyword id="KW-0443">Lipid metabolism</keyword>
<keyword id="KW-0677">Repeat</keyword>
<keyword id="KW-0808">Transferase</keyword>
<reference key="1">
    <citation type="journal article" date="2009" name="Infect. Immun.">
        <title>Comparative genomics reveal extensive transposon-mediated genomic plasticity and diversity among potential effector proteins within the genus Coxiella.</title>
        <authorList>
            <person name="Beare P.A."/>
            <person name="Unsworth N."/>
            <person name="Andoh M."/>
            <person name="Voth D.E."/>
            <person name="Omsland A."/>
            <person name="Gilk S.D."/>
            <person name="Williams K.P."/>
            <person name="Sobral B.W."/>
            <person name="Kupko J.J. III"/>
            <person name="Porcella S.F."/>
            <person name="Samuel J.E."/>
            <person name="Heinzen R.A."/>
        </authorList>
    </citation>
    <scope>NUCLEOTIDE SEQUENCE [LARGE SCALE GENOMIC DNA]</scope>
    <source>
        <strain>CbuG_Q212</strain>
    </source>
</reference>
<evidence type="ECO:0000255" key="1">
    <source>
        <dbReference type="HAMAP-Rule" id="MF_00523"/>
    </source>
</evidence>
<accession>B6J168</accession>